<evidence type="ECO:0000250" key="1"/>
<evidence type="ECO:0000256" key="2">
    <source>
        <dbReference type="SAM" id="MobiDB-lite"/>
    </source>
</evidence>
<evidence type="ECO:0000305" key="3"/>
<dbReference type="EMBL" id="AF001591">
    <property type="protein sequence ID" value="AAB91381.1"/>
    <property type="molecule type" value="Genomic_DNA"/>
</dbReference>
<dbReference type="GO" id="GO:0000786">
    <property type="term" value="C:nucleosome"/>
    <property type="evidence" value="ECO:0007669"/>
    <property type="project" value="UniProtKB-KW"/>
</dbReference>
<dbReference type="GO" id="GO:0005634">
    <property type="term" value="C:nucleus"/>
    <property type="evidence" value="ECO:0007669"/>
    <property type="project" value="UniProtKB-SubCell"/>
</dbReference>
<dbReference type="GO" id="GO:0003677">
    <property type="term" value="F:DNA binding"/>
    <property type="evidence" value="ECO:0007669"/>
    <property type="project" value="UniProtKB-KW"/>
</dbReference>
<dbReference type="GO" id="GO:0030261">
    <property type="term" value="P:chromosome condensation"/>
    <property type="evidence" value="ECO:0007669"/>
    <property type="project" value="UniProtKB-KW"/>
</dbReference>
<dbReference type="GO" id="GO:0035092">
    <property type="term" value="P:sperm DNA condensation"/>
    <property type="evidence" value="ECO:0007669"/>
    <property type="project" value="InterPro"/>
</dbReference>
<dbReference type="InterPro" id="IPR000221">
    <property type="entry name" value="Protamine_P1"/>
</dbReference>
<dbReference type="PROSITE" id="PS00048">
    <property type="entry name" value="PROTAMINE_P1"/>
    <property type="match status" value="1"/>
</dbReference>
<organism>
    <name type="scientific">Planigale maculata maculata</name>
    <name type="common">Common planigale</name>
    <dbReference type="NCBI Taxonomy" id="60870"/>
    <lineage>
        <taxon>Eukaryota</taxon>
        <taxon>Metazoa</taxon>
        <taxon>Chordata</taxon>
        <taxon>Craniata</taxon>
        <taxon>Vertebrata</taxon>
        <taxon>Euteleostomi</taxon>
        <taxon>Mammalia</taxon>
        <taxon>Metatheria</taxon>
        <taxon>Dasyuromorphia</taxon>
        <taxon>Dasyuridae</taxon>
        <taxon>Planigale</taxon>
    </lineage>
</organism>
<comment type="function">
    <text evidence="1">Protamines substitute for histones in the chromatin of sperm during the haploid phase of spermatogenesis. They compact sperm DNA into a highly condensed, stable and inactive complex (By similarity).</text>
</comment>
<comment type="subcellular location">
    <subcellularLocation>
        <location evidence="1">Nucleus</location>
    </subcellularLocation>
    <subcellularLocation>
        <location evidence="1">Chromosome</location>
    </subcellularLocation>
</comment>
<comment type="tissue specificity">
    <text>Testis.</text>
</comment>
<comment type="similarity">
    <text evidence="3">Belongs to the protamine P1 family.</text>
</comment>
<proteinExistence type="evidence at transcript level"/>
<reference key="1">
    <citation type="journal article" date="1997" name="Mol. Phylogenet. Evol.">
        <title>A multigene assessment of phylogenetic relationships within the dasyurid marsupial subfamily Sminthopsinae.</title>
        <authorList>
            <person name="Krajewski C."/>
            <person name="Blacket M."/>
            <person name="Buckley L."/>
            <person name="Westerman M."/>
        </authorList>
    </citation>
    <scope>NUCLEOTIDE SEQUENCE [GENOMIC DNA]</scope>
</reference>
<accession>Q71VP4</accession>
<gene>
    <name type="primary">PRM1</name>
</gene>
<keyword id="KW-0158">Chromosome</keyword>
<keyword id="KW-0217">Developmental protein</keyword>
<keyword id="KW-0221">Differentiation</keyword>
<keyword id="KW-0226">DNA condensation</keyword>
<keyword id="KW-0238">DNA-binding</keyword>
<keyword id="KW-0544">Nucleosome core</keyword>
<keyword id="KW-0539">Nucleus</keyword>
<keyword id="KW-0744">Spermatogenesis</keyword>
<sequence length="63" mass="8697">MARYRRHSRSRSRSRYRRRRRRRSRHHNRRRTYRRSRRHSRRRRGRRRGYSRRRYSRRGRRRY</sequence>
<protein>
    <recommendedName>
        <fullName>Sperm protamine P1</fullName>
    </recommendedName>
</protein>
<feature type="chain" id="PRO_0000191535" description="Sperm protamine P1">
    <location>
        <begin position="1"/>
        <end position="63"/>
    </location>
</feature>
<feature type="region of interest" description="Disordered" evidence="2">
    <location>
        <begin position="1"/>
        <end position="63"/>
    </location>
</feature>
<name>HSP1_PLAMM</name>